<protein>
    <recommendedName>
        <fullName evidence="1">4-hydroxy-tetrahydrodipicolinate reductase</fullName>
        <shortName evidence="1">HTPA reductase</shortName>
        <ecNumber evidence="1">1.17.1.8</ecNumber>
    </recommendedName>
</protein>
<reference key="1">
    <citation type="submission" date="2007-06" db="EMBL/GenBank/DDBJ databases">
        <title>Complete sequence of chromosome of Staphylococcus aureus subsp. aureus JH1.</title>
        <authorList>
            <consortium name="US DOE Joint Genome Institute"/>
            <person name="Copeland A."/>
            <person name="Lucas S."/>
            <person name="Lapidus A."/>
            <person name="Barry K."/>
            <person name="Detter J.C."/>
            <person name="Glavina del Rio T."/>
            <person name="Hammon N."/>
            <person name="Israni S."/>
            <person name="Dalin E."/>
            <person name="Tice H."/>
            <person name="Pitluck S."/>
            <person name="Chain P."/>
            <person name="Malfatti S."/>
            <person name="Shin M."/>
            <person name="Vergez L."/>
            <person name="Schmutz J."/>
            <person name="Larimer F."/>
            <person name="Land M."/>
            <person name="Hauser L."/>
            <person name="Kyrpides N."/>
            <person name="Ivanova N."/>
            <person name="Tomasz A."/>
            <person name="Richardson P."/>
        </authorList>
    </citation>
    <scope>NUCLEOTIDE SEQUENCE [LARGE SCALE GENOMIC DNA]</scope>
    <source>
        <strain>JH1</strain>
    </source>
</reference>
<proteinExistence type="inferred from homology"/>
<gene>
    <name evidence="1" type="primary">dapB</name>
    <name type="ordered locus">SaurJH1_1486</name>
</gene>
<comment type="function">
    <text evidence="1">Catalyzes the conversion of 4-hydroxy-tetrahydrodipicolinate (HTPA) to tetrahydrodipicolinate.</text>
</comment>
<comment type="catalytic activity">
    <reaction evidence="1">
        <text>(S)-2,3,4,5-tetrahydrodipicolinate + NAD(+) + H2O = (2S,4S)-4-hydroxy-2,3,4,5-tetrahydrodipicolinate + NADH + H(+)</text>
        <dbReference type="Rhea" id="RHEA:35323"/>
        <dbReference type="ChEBI" id="CHEBI:15377"/>
        <dbReference type="ChEBI" id="CHEBI:15378"/>
        <dbReference type="ChEBI" id="CHEBI:16845"/>
        <dbReference type="ChEBI" id="CHEBI:57540"/>
        <dbReference type="ChEBI" id="CHEBI:57945"/>
        <dbReference type="ChEBI" id="CHEBI:67139"/>
        <dbReference type="EC" id="1.17.1.8"/>
    </reaction>
</comment>
<comment type="catalytic activity">
    <reaction evidence="1">
        <text>(S)-2,3,4,5-tetrahydrodipicolinate + NADP(+) + H2O = (2S,4S)-4-hydroxy-2,3,4,5-tetrahydrodipicolinate + NADPH + H(+)</text>
        <dbReference type="Rhea" id="RHEA:35331"/>
        <dbReference type="ChEBI" id="CHEBI:15377"/>
        <dbReference type="ChEBI" id="CHEBI:15378"/>
        <dbReference type="ChEBI" id="CHEBI:16845"/>
        <dbReference type="ChEBI" id="CHEBI:57783"/>
        <dbReference type="ChEBI" id="CHEBI:58349"/>
        <dbReference type="ChEBI" id="CHEBI:67139"/>
        <dbReference type="EC" id="1.17.1.8"/>
    </reaction>
</comment>
<comment type="pathway">
    <text evidence="1">Amino-acid biosynthesis; L-lysine biosynthesis via DAP pathway; (S)-tetrahydrodipicolinate from L-aspartate: step 4/4.</text>
</comment>
<comment type="subcellular location">
    <subcellularLocation>
        <location evidence="1">Cytoplasm</location>
    </subcellularLocation>
</comment>
<comment type="similarity">
    <text evidence="1">Belongs to the DapB family.</text>
</comment>
<comment type="caution">
    <text evidence="2">Was originally thought to be a dihydrodipicolinate reductase (DHDPR), catalyzing the conversion of dihydrodipicolinate to tetrahydrodipicolinate. However, it was shown in E.coli that the substrate of the enzymatic reaction is not dihydrodipicolinate (DHDP) but in fact (2S,4S)-4-hydroxy-2,3,4,5-tetrahydrodipicolinic acid (HTPA), the product released by the DapA-catalyzed reaction.</text>
</comment>
<feature type="chain" id="PRO_1000094004" description="4-hydroxy-tetrahydrodipicolinate reductase">
    <location>
        <begin position="1"/>
        <end position="240"/>
    </location>
</feature>
<feature type="active site" description="Proton donor/acceptor" evidence="1">
    <location>
        <position position="135"/>
    </location>
</feature>
<feature type="active site" description="Proton donor" evidence="1">
    <location>
        <position position="139"/>
    </location>
</feature>
<feature type="binding site" evidence="1">
    <location>
        <begin position="79"/>
        <end position="81"/>
    </location>
    <ligand>
        <name>NAD(+)</name>
        <dbReference type="ChEBI" id="CHEBI:57540"/>
    </ligand>
</feature>
<feature type="binding site" evidence="1">
    <location>
        <begin position="103"/>
        <end position="106"/>
    </location>
    <ligand>
        <name>NAD(+)</name>
        <dbReference type="ChEBI" id="CHEBI:57540"/>
    </ligand>
</feature>
<feature type="binding site" evidence="1">
    <location>
        <position position="136"/>
    </location>
    <ligand>
        <name>(S)-2,3,4,5-tetrahydrodipicolinate</name>
        <dbReference type="ChEBI" id="CHEBI:16845"/>
    </ligand>
</feature>
<feature type="binding site" evidence="1">
    <location>
        <begin position="145"/>
        <end position="146"/>
    </location>
    <ligand>
        <name>(S)-2,3,4,5-tetrahydrodipicolinate</name>
        <dbReference type="ChEBI" id="CHEBI:16845"/>
    </ligand>
</feature>
<dbReference type="EC" id="1.17.1.8" evidence="1"/>
<dbReference type="EMBL" id="CP000736">
    <property type="protein sequence ID" value="ABR52335.1"/>
    <property type="molecule type" value="Genomic_DNA"/>
</dbReference>
<dbReference type="SMR" id="A6U1L7"/>
<dbReference type="KEGG" id="sah:SaurJH1_1486"/>
<dbReference type="HOGENOM" id="CLU_047479_2_2_9"/>
<dbReference type="UniPathway" id="UPA00034">
    <property type="reaction ID" value="UER00018"/>
</dbReference>
<dbReference type="GO" id="GO:0005829">
    <property type="term" value="C:cytosol"/>
    <property type="evidence" value="ECO:0007669"/>
    <property type="project" value="TreeGrafter"/>
</dbReference>
<dbReference type="GO" id="GO:0008839">
    <property type="term" value="F:4-hydroxy-tetrahydrodipicolinate reductase"/>
    <property type="evidence" value="ECO:0007669"/>
    <property type="project" value="UniProtKB-EC"/>
</dbReference>
<dbReference type="GO" id="GO:0051287">
    <property type="term" value="F:NAD binding"/>
    <property type="evidence" value="ECO:0007669"/>
    <property type="project" value="UniProtKB-UniRule"/>
</dbReference>
<dbReference type="GO" id="GO:0050661">
    <property type="term" value="F:NADP binding"/>
    <property type="evidence" value="ECO:0007669"/>
    <property type="project" value="UniProtKB-UniRule"/>
</dbReference>
<dbReference type="GO" id="GO:0016726">
    <property type="term" value="F:oxidoreductase activity, acting on CH or CH2 groups, NAD or NADP as acceptor"/>
    <property type="evidence" value="ECO:0007669"/>
    <property type="project" value="UniProtKB-UniRule"/>
</dbReference>
<dbReference type="GO" id="GO:0019877">
    <property type="term" value="P:diaminopimelate biosynthetic process"/>
    <property type="evidence" value="ECO:0007669"/>
    <property type="project" value="UniProtKB-UniRule"/>
</dbReference>
<dbReference type="GO" id="GO:0009089">
    <property type="term" value="P:lysine biosynthetic process via diaminopimelate"/>
    <property type="evidence" value="ECO:0007669"/>
    <property type="project" value="UniProtKB-UniRule"/>
</dbReference>
<dbReference type="CDD" id="cd02274">
    <property type="entry name" value="DHDPR_N"/>
    <property type="match status" value="1"/>
</dbReference>
<dbReference type="FunFam" id="3.30.360.10:FF:000009">
    <property type="entry name" value="4-hydroxy-tetrahydrodipicolinate reductase"/>
    <property type="match status" value="1"/>
</dbReference>
<dbReference type="Gene3D" id="3.30.360.10">
    <property type="entry name" value="Dihydrodipicolinate Reductase, domain 2"/>
    <property type="match status" value="1"/>
</dbReference>
<dbReference type="Gene3D" id="3.40.50.720">
    <property type="entry name" value="NAD(P)-binding Rossmann-like Domain"/>
    <property type="match status" value="1"/>
</dbReference>
<dbReference type="HAMAP" id="MF_00102">
    <property type="entry name" value="DapB"/>
    <property type="match status" value="1"/>
</dbReference>
<dbReference type="InterPro" id="IPR022663">
    <property type="entry name" value="DapB_C"/>
</dbReference>
<dbReference type="InterPro" id="IPR000846">
    <property type="entry name" value="DapB_N"/>
</dbReference>
<dbReference type="InterPro" id="IPR022664">
    <property type="entry name" value="DapB_N_CS"/>
</dbReference>
<dbReference type="InterPro" id="IPR023940">
    <property type="entry name" value="DHDPR_bac"/>
</dbReference>
<dbReference type="InterPro" id="IPR036291">
    <property type="entry name" value="NAD(P)-bd_dom_sf"/>
</dbReference>
<dbReference type="NCBIfam" id="TIGR00036">
    <property type="entry name" value="dapB"/>
    <property type="match status" value="1"/>
</dbReference>
<dbReference type="PANTHER" id="PTHR20836:SF7">
    <property type="entry name" value="4-HYDROXY-TETRAHYDRODIPICOLINATE REDUCTASE"/>
    <property type="match status" value="1"/>
</dbReference>
<dbReference type="PANTHER" id="PTHR20836">
    <property type="entry name" value="DIHYDRODIPICOLINATE REDUCTASE"/>
    <property type="match status" value="1"/>
</dbReference>
<dbReference type="Pfam" id="PF05173">
    <property type="entry name" value="DapB_C"/>
    <property type="match status" value="1"/>
</dbReference>
<dbReference type="Pfam" id="PF01113">
    <property type="entry name" value="DapB_N"/>
    <property type="match status" value="1"/>
</dbReference>
<dbReference type="PIRSF" id="PIRSF000161">
    <property type="entry name" value="DHPR"/>
    <property type="match status" value="1"/>
</dbReference>
<dbReference type="SUPFAM" id="SSF55347">
    <property type="entry name" value="Glyceraldehyde-3-phosphate dehydrogenase-like, C-terminal domain"/>
    <property type="match status" value="1"/>
</dbReference>
<dbReference type="SUPFAM" id="SSF51735">
    <property type="entry name" value="NAD(P)-binding Rossmann-fold domains"/>
    <property type="match status" value="1"/>
</dbReference>
<dbReference type="PROSITE" id="PS01298">
    <property type="entry name" value="DAPB"/>
    <property type="match status" value="1"/>
</dbReference>
<organism>
    <name type="scientific">Staphylococcus aureus (strain JH1)</name>
    <dbReference type="NCBI Taxonomy" id="359787"/>
    <lineage>
        <taxon>Bacteria</taxon>
        <taxon>Bacillati</taxon>
        <taxon>Bacillota</taxon>
        <taxon>Bacilli</taxon>
        <taxon>Bacillales</taxon>
        <taxon>Staphylococcaceae</taxon>
        <taxon>Staphylococcus</taxon>
    </lineage>
</organism>
<sequence length="240" mass="26708">MKILLIGYGAMNQRVARLAEEKGHEIVGVIENTPKATTPYQQYQHIADVKDADVAIDFSNPNLLFPLLDEEFHLPLVVATTGEKEKLLNKLDELSQNIPVFFSANMSYGVHALTKILAAAVPLLDDFDIELTEAHHNKKVDAPSGTLEKLYDVIVSLKENVTPVYDRHELNEKRQPQDIGIHSIRGGTIVGEHEVLFAGTDETIQITHRAQSKDIFANGAIQAAERLVNKPNGFYTFDNL</sequence>
<accession>A6U1L7</accession>
<keyword id="KW-0028">Amino-acid biosynthesis</keyword>
<keyword id="KW-0963">Cytoplasm</keyword>
<keyword id="KW-0220">Diaminopimelate biosynthesis</keyword>
<keyword id="KW-0457">Lysine biosynthesis</keyword>
<keyword id="KW-0520">NAD</keyword>
<keyword id="KW-0521">NADP</keyword>
<keyword id="KW-0560">Oxidoreductase</keyword>
<evidence type="ECO:0000255" key="1">
    <source>
        <dbReference type="HAMAP-Rule" id="MF_00102"/>
    </source>
</evidence>
<evidence type="ECO:0000305" key="2"/>
<name>DAPB_STAA2</name>